<evidence type="ECO:0000250" key="1"/>
<evidence type="ECO:0000305" key="2"/>
<comment type="function">
    <text evidence="1">Involved in the metabolism of galactose. Catalyzes the conversion of UDP-galactose (UDP-Gal) to UDP-glucose (UDP-Glc) through a mechanism involving the transient reduction of NAD (By similarity).</text>
</comment>
<comment type="catalytic activity">
    <reaction>
        <text>UDP-alpha-D-glucose = UDP-alpha-D-galactose</text>
        <dbReference type="Rhea" id="RHEA:22168"/>
        <dbReference type="ChEBI" id="CHEBI:58885"/>
        <dbReference type="ChEBI" id="CHEBI:66914"/>
        <dbReference type="EC" id="5.1.3.2"/>
    </reaction>
</comment>
<comment type="cofactor">
    <cofactor evidence="1">
        <name>NAD(+)</name>
        <dbReference type="ChEBI" id="CHEBI:57540"/>
    </cofactor>
</comment>
<comment type="pathway">
    <text>Carbohydrate metabolism; galactose metabolism.</text>
</comment>
<comment type="subunit">
    <text evidence="1">Homodimer.</text>
</comment>
<comment type="similarity">
    <text evidence="2">Belongs to the NAD(P)-dependent epimerase/dehydratase family.</text>
</comment>
<dbReference type="EC" id="5.1.3.2"/>
<dbReference type="EMBL" id="U46859">
    <property type="protein sequence ID" value="AAC60777.1"/>
    <property type="molecule type" value="Genomic_DNA"/>
</dbReference>
<dbReference type="EMBL" id="U43708">
    <property type="protein sequence ID" value="AAC44470.1"/>
    <property type="molecule type" value="Genomic_DNA"/>
</dbReference>
<dbReference type="RefSeq" id="WP_005167749.1">
    <property type="nucleotide sequence ID" value="NZ_NBTE02000004.1"/>
</dbReference>
<dbReference type="SMR" id="Q57301"/>
<dbReference type="STRING" id="1443113.LC20_01464"/>
<dbReference type="KEGG" id="yew:CH47_2446"/>
<dbReference type="UniPathway" id="UPA00214"/>
<dbReference type="GO" id="GO:0005829">
    <property type="term" value="C:cytosol"/>
    <property type="evidence" value="ECO:0007669"/>
    <property type="project" value="TreeGrafter"/>
</dbReference>
<dbReference type="GO" id="GO:0003978">
    <property type="term" value="F:UDP-glucose 4-epimerase activity"/>
    <property type="evidence" value="ECO:0007669"/>
    <property type="project" value="UniProtKB-EC"/>
</dbReference>
<dbReference type="GO" id="GO:0006012">
    <property type="term" value="P:galactose metabolic process"/>
    <property type="evidence" value="ECO:0007669"/>
    <property type="project" value="UniProtKB-UniPathway"/>
</dbReference>
<dbReference type="CDD" id="cd05247">
    <property type="entry name" value="UDP_G4E_1_SDR_e"/>
    <property type="match status" value="1"/>
</dbReference>
<dbReference type="FunFam" id="3.90.25.10:FF:000028">
    <property type="entry name" value="UDP-glucose 4-epimerase GalE"/>
    <property type="match status" value="1"/>
</dbReference>
<dbReference type="Gene3D" id="3.40.50.720">
    <property type="entry name" value="NAD(P)-binding Rossmann-like Domain"/>
    <property type="match status" value="1"/>
</dbReference>
<dbReference type="Gene3D" id="3.90.25.10">
    <property type="entry name" value="UDP-galactose 4-epimerase, domain 1"/>
    <property type="match status" value="1"/>
</dbReference>
<dbReference type="InterPro" id="IPR001509">
    <property type="entry name" value="Epimerase_deHydtase"/>
</dbReference>
<dbReference type="InterPro" id="IPR036291">
    <property type="entry name" value="NAD(P)-bd_dom_sf"/>
</dbReference>
<dbReference type="InterPro" id="IPR005886">
    <property type="entry name" value="UDP_G4E"/>
</dbReference>
<dbReference type="NCBIfam" id="TIGR01179">
    <property type="entry name" value="galE"/>
    <property type="match status" value="1"/>
</dbReference>
<dbReference type="NCBIfam" id="NF007956">
    <property type="entry name" value="PRK10675.1"/>
    <property type="match status" value="1"/>
</dbReference>
<dbReference type="PANTHER" id="PTHR43725">
    <property type="entry name" value="UDP-GLUCOSE 4-EPIMERASE"/>
    <property type="match status" value="1"/>
</dbReference>
<dbReference type="PANTHER" id="PTHR43725:SF47">
    <property type="entry name" value="UDP-GLUCOSE 4-EPIMERASE"/>
    <property type="match status" value="1"/>
</dbReference>
<dbReference type="Pfam" id="PF01370">
    <property type="entry name" value="Epimerase"/>
    <property type="match status" value="1"/>
</dbReference>
<dbReference type="SUPFAM" id="SSF51735">
    <property type="entry name" value="NAD(P)-binding Rossmann-fold domains"/>
    <property type="match status" value="1"/>
</dbReference>
<keyword id="KW-0119">Carbohydrate metabolism</keyword>
<keyword id="KW-0299">Galactose metabolism</keyword>
<keyword id="KW-0413">Isomerase</keyword>
<keyword id="KW-0520">NAD</keyword>
<protein>
    <recommendedName>
        <fullName>UDP-glucose 4-epimerase</fullName>
        <ecNumber>5.1.3.2</ecNumber>
    </recommendedName>
    <alternativeName>
        <fullName>Galactowaldenase</fullName>
    </alternativeName>
    <alternativeName>
        <fullName>UDP-galactose 4-epimerase</fullName>
    </alternativeName>
</protein>
<accession>Q57301</accession>
<sequence>MSILITGGAGYIGSHTVLTLLEQGRNVVVLDNLINSSAESLARVSKICGRKPNFYHGDILDRSCLKLIFSSHKIDSVIHFAGLKSVGESVEKPIEYYQNNVVGSITLLEEMCLANVKKLIFSSSATVYGEPEFVPLTEKARIGGTTNPYGTSKVMVEQILKDFSLAHPDYSITALRYFNPVGAHPSGLIGEDPNGKPNNLLPFITQVAIGKLSKLLVYGNDYDTPDGSGIRDYIHVMDLAEGHLSTLINLTSGFRIYNLGTGVGYSVLHMIKEFERITGKNIPFDIVSRRPGDIAECWASPELAHLELGWYAKRTLVDMLQDAWKWQKMNPNGYNC</sequence>
<reference key="1">
    <citation type="journal article" date="1996" name="Microbiology">
        <title>The gene cluster directing O-antigen biosynthesis in Yersinia enterocolitica serotype 0:8: identification of the genes for mannose and galactose biosynthesis and the gene for the O-antigen polymerase.</title>
        <authorList>
            <person name="Zhang L."/>
            <person name="Toivanen P."/>
            <person name="Skurnik M."/>
        </authorList>
    </citation>
    <scope>NUCLEOTIDE SEQUENCE [GENOMIC DNA]</scope>
    <source>
        <strain>8081C / Serotype O:8</strain>
    </source>
</reference>
<reference key="2">
    <citation type="submission" date="1996-01" db="EMBL/GenBank/DDBJ databases">
        <authorList>
            <person name="Pierson D.E."/>
            <person name="Carlson S."/>
        </authorList>
    </citation>
    <scope>NUCLEOTIDE SEQUENCE [GENOMIC DNA]</scope>
    <source>
        <strain>8081C / Serotype O:8</strain>
    </source>
</reference>
<organism>
    <name type="scientific">Yersinia enterocolitica</name>
    <dbReference type="NCBI Taxonomy" id="630"/>
    <lineage>
        <taxon>Bacteria</taxon>
        <taxon>Pseudomonadati</taxon>
        <taxon>Pseudomonadota</taxon>
        <taxon>Gammaproteobacteria</taxon>
        <taxon>Enterobacterales</taxon>
        <taxon>Yersiniaceae</taxon>
        <taxon>Yersinia</taxon>
    </lineage>
</organism>
<feature type="chain" id="PRO_0000183223" description="UDP-glucose 4-epimerase">
    <location>
        <begin position="1"/>
        <end position="336"/>
    </location>
</feature>
<feature type="active site" description="Proton acceptor" evidence="1">
    <location>
        <position position="149"/>
    </location>
</feature>
<feature type="binding site" evidence="1">
    <location>
        <begin position="11"/>
        <end position="12"/>
    </location>
    <ligand>
        <name>NAD(+)</name>
        <dbReference type="ChEBI" id="CHEBI:57540"/>
    </ligand>
</feature>
<feature type="binding site" evidence="1">
    <location>
        <begin position="31"/>
        <end position="36"/>
    </location>
    <ligand>
        <name>NAD(+)</name>
        <dbReference type="ChEBI" id="CHEBI:57540"/>
    </ligand>
</feature>
<feature type="binding site" evidence="1">
    <location>
        <begin position="58"/>
        <end position="59"/>
    </location>
    <ligand>
        <name>NAD(+)</name>
        <dbReference type="ChEBI" id="CHEBI:57540"/>
    </ligand>
</feature>
<feature type="binding site" evidence="1">
    <location>
        <begin position="80"/>
        <end position="84"/>
    </location>
    <ligand>
        <name>NAD(+)</name>
        <dbReference type="ChEBI" id="CHEBI:57540"/>
    </ligand>
</feature>
<feature type="binding site" evidence="1">
    <location>
        <position position="99"/>
    </location>
    <ligand>
        <name>NAD(+)</name>
        <dbReference type="ChEBI" id="CHEBI:57540"/>
    </ligand>
</feature>
<feature type="binding site" evidence="1">
    <location>
        <position position="124"/>
    </location>
    <ligand>
        <name>NAD(+)</name>
        <dbReference type="ChEBI" id="CHEBI:57540"/>
    </ligand>
</feature>
<feature type="binding site" evidence="1">
    <location>
        <position position="124"/>
    </location>
    <ligand>
        <name>substrate</name>
    </ligand>
</feature>
<feature type="binding site" evidence="1">
    <location>
        <position position="149"/>
    </location>
    <ligand>
        <name>NAD(+)</name>
        <dbReference type="ChEBI" id="CHEBI:57540"/>
    </ligand>
</feature>
<feature type="binding site" evidence="1">
    <location>
        <position position="149"/>
    </location>
    <ligand>
        <name>substrate</name>
    </ligand>
</feature>
<feature type="binding site" evidence="1">
    <location>
        <position position="153"/>
    </location>
    <ligand>
        <name>NAD(+)</name>
        <dbReference type="ChEBI" id="CHEBI:57540"/>
    </ligand>
</feature>
<feature type="binding site" evidence="1">
    <location>
        <position position="178"/>
    </location>
    <ligand>
        <name>NAD(+)</name>
        <dbReference type="ChEBI" id="CHEBI:57540"/>
    </ligand>
</feature>
<feature type="binding site" evidence="1">
    <location>
        <position position="179"/>
    </location>
    <ligand>
        <name>substrate</name>
    </ligand>
</feature>
<feature type="binding site" evidence="1">
    <location>
        <begin position="199"/>
        <end position="200"/>
    </location>
    <ligand>
        <name>substrate</name>
    </ligand>
</feature>
<feature type="binding site" evidence="1">
    <location>
        <begin position="216"/>
        <end position="218"/>
    </location>
    <ligand>
        <name>substrate</name>
    </ligand>
</feature>
<feature type="binding site" evidence="1">
    <location>
        <position position="231"/>
    </location>
    <ligand>
        <name>substrate</name>
    </ligand>
</feature>
<feature type="binding site" evidence="1">
    <location>
        <begin position="290"/>
        <end position="293"/>
    </location>
    <ligand>
        <name>substrate</name>
    </ligand>
</feature>
<proteinExistence type="inferred from homology"/>
<name>GALE_YEREN</name>
<gene>
    <name type="primary">galE</name>
</gene>